<organism>
    <name type="scientific">Vibrio parahaemolyticus serotype O3:K6 (strain RIMD 2210633)</name>
    <dbReference type="NCBI Taxonomy" id="223926"/>
    <lineage>
        <taxon>Bacteria</taxon>
        <taxon>Pseudomonadati</taxon>
        <taxon>Pseudomonadota</taxon>
        <taxon>Gammaproteobacteria</taxon>
        <taxon>Vibrionales</taxon>
        <taxon>Vibrionaceae</taxon>
        <taxon>Vibrio</taxon>
    </lineage>
</organism>
<evidence type="ECO:0000255" key="1">
    <source>
        <dbReference type="HAMAP-Rule" id="MF_00033"/>
    </source>
</evidence>
<accession>Q87SG4</accession>
<proteinExistence type="inferred from homology"/>
<keyword id="KW-0131">Cell cycle</keyword>
<keyword id="KW-0132">Cell division</keyword>
<keyword id="KW-0997">Cell inner membrane</keyword>
<keyword id="KW-1003">Cell membrane</keyword>
<keyword id="KW-0133">Cell shape</keyword>
<keyword id="KW-0961">Cell wall biogenesis/degradation</keyword>
<keyword id="KW-0328">Glycosyltransferase</keyword>
<keyword id="KW-0472">Membrane</keyword>
<keyword id="KW-0573">Peptidoglycan synthesis</keyword>
<keyword id="KW-0808">Transferase</keyword>
<comment type="function">
    <text evidence="1">Cell wall formation. Catalyzes the transfer of a GlcNAc subunit on undecaprenyl-pyrophosphoryl-MurNAc-pentapeptide (lipid intermediate I) to form undecaprenyl-pyrophosphoryl-MurNAc-(pentapeptide)GlcNAc (lipid intermediate II).</text>
</comment>
<comment type="catalytic activity">
    <reaction evidence="1">
        <text>di-trans,octa-cis-undecaprenyl diphospho-N-acetyl-alpha-D-muramoyl-L-alanyl-D-glutamyl-meso-2,6-diaminopimeloyl-D-alanyl-D-alanine + UDP-N-acetyl-alpha-D-glucosamine = di-trans,octa-cis-undecaprenyl diphospho-[N-acetyl-alpha-D-glucosaminyl-(1-&gt;4)]-N-acetyl-alpha-D-muramoyl-L-alanyl-D-glutamyl-meso-2,6-diaminopimeloyl-D-alanyl-D-alanine + UDP + H(+)</text>
        <dbReference type="Rhea" id="RHEA:31227"/>
        <dbReference type="ChEBI" id="CHEBI:15378"/>
        <dbReference type="ChEBI" id="CHEBI:57705"/>
        <dbReference type="ChEBI" id="CHEBI:58223"/>
        <dbReference type="ChEBI" id="CHEBI:61387"/>
        <dbReference type="ChEBI" id="CHEBI:61388"/>
        <dbReference type="EC" id="2.4.1.227"/>
    </reaction>
</comment>
<comment type="pathway">
    <text evidence="1">Cell wall biogenesis; peptidoglycan biosynthesis.</text>
</comment>
<comment type="subcellular location">
    <subcellularLocation>
        <location evidence="1">Cell inner membrane</location>
        <topology evidence="1">Peripheral membrane protein</topology>
        <orientation evidence="1">Cytoplasmic side</orientation>
    </subcellularLocation>
</comment>
<comment type="similarity">
    <text evidence="1">Belongs to the glycosyltransferase 28 family. MurG subfamily.</text>
</comment>
<feature type="chain" id="PRO_0000109236" description="UDP-N-acetylglucosamine--N-acetylmuramyl-(pentapeptide) pyrophosphoryl-undecaprenol N-acetylglucosamine transferase">
    <location>
        <begin position="1"/>
        <end position="355"/>
    </location>
</feature>
<feature type="binding site" evidence="1">
    <location>
        <begin position="14"/>
        <end position="16"/>
    </location>
    <ligand>
        <name>UDP-N-acetyl-alpha-D-glucosamine</name>
        <dbReference type="ChEBI" id="CHEBI:57705"/>
    </ligand>
</feature>
<feature type="binding site" evidence="1">
    <location>
        <position position="126"/>
    </location>
    <ligand>
        <name>UDP-N-acetyl-alpha-D-glucosamine</name>
        <dbReference type="ChEBI" id="CHEBI:57705"/>
    </ligand>
</feature>
<feature type="binding site" evidence="1">
    <location>
        <position position="162"/>
    </location>
    <ligand>
        <name>UDP-N-acetyl-alpha-D-glucosamine</name>
        <dbReference type="ChEBI" id="CHEBI:57705"/>
    </ligand>
</feature>
<feature type="binding site" evidence="1">
    <location>
        <position position="190"/>
    </location>
    <ligand>
        <name>UDP-N-acetyl-alpha-D-glucosamine</name>
        <dbReference type="ChEBI" id="CHEBI:57705"/>
    </ligand>
</feature>
<feature type="binding site" evidence="1">
    <location>
        <position position="243"/>
    </location>
    <ligand>
        <name>UDP-N-acetyl-alpha-D-glucosamine</name>
        <dbReference type="ChEBI" id="CHEBI:57705"/>
    </ligand>
</feature>
<feature type="binding site" evidence="1">
    <location>
        <begin position="262"/>
        <end position="267"/>
    </location>
    <ligand>
        <name>UDP-N-acetyl-alpha-D-glucosamine</name>
        <dbReference type="ChEBI" id="CHEBI:57705"/>
    </ligand>
</feature>
<feature type="binding site" evidence="1">
    <location>
        <position position="287"/>
    </location>
    <ligand>
        <name>UDP-N-acetyl-alpha-D-glucosamine</name>
        <dbReference type="ChEBI" id="CHEBI:57705"/>
    </ligand>
</feature>
<dbReference type="EC" id="2.4.1.227" evidence="1"/>
<dbReference type="EMBL" id="BA000031">
    <property type="protein sequence ID" value="BAC58723.1"/>
    <property type="molecule type" value="Genomic_DNA"/>
</dbReference>
<dbReference type="RefSeq" id="NP_796839.1">
    <property type="nucleotide sequence ID" value="NC_004603.1"/>
</dbReference>
<dbReference type="RefSeq" id="WP_005458193.1">
    <property type="nucleotide sequence ID" value="NC_004603.1"/>
</dbReference>
<dbReference type="SMR" id="Q87SG4"/>
<dbReference type="CAZy" id="GT28">
    <property type="family name" value="Glycosyltransferase Family 28"/>
</dbReference>
<dbReference type="GeneID" id="1187928"/>
<dbReference type="KEGG" id="vpa:VP0460"/>
<dbReference type="PATRIC" id="fig|223926.6.peg.438"/>
<dbReference type="eggNOG" id="COG0707">
    <property type="taxonomic scope" value="Bacteria"/>
</dbReference>
<dbReference type="HOGENOM" id="CLU_037404_2_0_6"/>
<dbReference type="UniPathway" id="UPA00219"/>
<dbReference type="Proteomes" id="UP000002493">
    <property type="component" value="Chromosome 1"/>
</dbReference>
<dbReference type="GO" id="GO:0005886">
    <property type="term" value="C:plasma membrane"/>
    <property type="evidence" value="ECO:0007669"/>
    <property type="project" value="UniProtKB-SubCell"/>
</dbReference>
<dbReference type="GO" id="GO:0051991">
    <property type="term" value="F:UDP-N-acetyl-D-glucosamine:N-acetylmuramoyl-L-alanyl-D-glutamyl-meso-2,6-diaminopimelyl-D-alanyl-D-alanine-diphosphoundecaprenol 4-beta-N-acetylglucosaminlytransferase activity"/>
    <property type="evidence" value="ECO:0007669"/>
    <property type="project" value="RHEA"/>
</dbReference>
<dbReference type="GO" id="GO:0050511">
    <property type="term" value="F:undecaprenyldiphospho-muramoylpentapeptide beta-N-acetylglucosaminyltransferase activity"/>
    <property type="evidence" value="ECO:0007669"/>
    <property type="project" value="UniProtKB-UniRule"/>
</dbReference>
<dbReference type="GO" id="GO:0005975">
    <property type="term" value="P:carbohydrate metabolic process"/>
    <property type="evidence" value="ECO:0007669"/>
    <property type="project" value="InterPro"/>
</dbReference>
<dbReference type="GO" id="GO:0051301">
    <property type="term" value="P:cell division"/>
    <property type="evidence" value="ECO:0007669"/>
    <property type="project" value="UniProtKB-KW"/>
</dbReference>
<dbReference type="GO" id="GO:0071555">
    <property type="term" value="P:cell wall organization"/>
    <property type="evidence" value="ECO:0007669"/>
    <property type="project" value="UniProtKB-KW"/>
</dbReference>
<dbReference type="GO" id="GO:0030259">
    <property type="term" value="P:lipid glycosylation"/>
    <property type="evidence" value="ECO:0007669"/>
    <property type="project" value="UniProtKB-UniRule"/>
</dbReference>
<dbReference type="GO" id="GO:0009252">
    <property type="term" value="P:peptidoglycan biosynthetic process"/>
    <property type="evidence" value="ECO:0007669"/>
    <property type="project" value="UniProtKB-UniRule"/>
</dbReference>
<dbReference type="GO" id="GO:0008360">
    <property type="term" value="P:regulation of cell shape"/>
    <property type="evidence" value="ECO:0007669"/>
    <property type="project" value="UniProtKB-KW"/>
</dbReference>
<dbReference type="CDD" id="cd03785">
    <property type="entry name" value="GT28_MurG"/>
    <property type="match status" value="1"/>
</dbReference>
<dbReference type="FunFam" id="3.40.50.2000:FF:000016">
    <property type="entry name" value="UDP-N-acetylglucosamine--N-acetylmuramyl-(pentapeptide) pyrophosphoryl-undecaprenol N-acetylglucosamine transferase"/>
    <property type="match status" value="1"/>
</dbReference>
<dbReference type="Gene3D" id="3.40.50.2000">
    <property type="entry name" value="Glycogen Phosphorylase B"/>
    <property type="match status" value="2"/>
</dbReference>
<dbReference type="HAMAP" id="MF_00033">
    <property type="entry name" value="MurG"/>
    <property type="match status" value="1"/>
</dbReference>
<dbReference type="InterPro" id="IPR006009">
    <property type="entry name" value="GlcNAc_MurG"/>
</dbReference>
<dbReference type="InterPro" id="IPR007235">
    <property type="entry name" value="Glyco_trans_28_C"/>
</dbReference>
<dbReference type="InterPro" id="IPR004276">
    <property type="entry name" value="GlycoTrans_28_N"/>
</dbReference>
<dbReference type="NCBIfam" id="TIGR01133">
    <property type="entry name" value="murG"/>
    <property type="match status" value="1"/>
</dbReference>
<dbReference type="PANTHER" id="PTHR21015:SF22">
    <property type="entry name" value="GLYCOSYLTRANSFERASE"/>
    <property type="match status" value="1"/>
</dbReference>
<dbReference type="PANTHER" id="PTHR21015">
    <property type="entry name" value="UDP-N-ACETYLGLUCOSAMINE--N-ACETYLMURAMYL-(PENTAPEPTIDE) PYROPHOSPHORYL-UNDECAPRENOL N-ACETYLGLUCOSAMINE TRANSFERASE 1"/>
    <property type="match status" value="1"/>
</dbReference>
<dbReference type="Pfam" id="PF04101">
    <property type="entry name" value="Glyco_tran_28_C"/>
    <property type="match status" value="1"/>
</dbReference>
<dbReference type="Pfam" id="PF03033">
    <property type="entry name" value="Glyco_transf_28"/>
    <property type="match status" value="1"/>
</dbReference>
<dbReference type="SUPFAM" id="SSF53756">
    <property type="entry name" value="UDP-Glycosyltransferase/glycogen phosphorylase"/>
    <property type="match status" value="1"/>
</dbReference>
<protein>
    <recommendedName>
        <fullName evidence="1">UDP-N-acetylglucosamine--N-acetylmuramyl-(pentapeptide) pyrophosphoryl-undecaprenol N-acetylglucosamine transferase</fullName>
        <ecNumber evidence="1">2.4.1.227</ecNumber>
    </recommendedName>
    <alternativeName>
        <fullName evidence="1">Undecaprenyl-PP-MurNAc-pentapeptide-UDPGlcNAc GlcNAc transferase</fullName>
    </alternativeName>
</protein>
<sequence>MKQNKRLMVMAGGTGGHVFPGLAVAKQLQEQGWEIRWLGTADRMEADLVPKHGIEIDFIKVKGLRGQGVKRLLAAPFQIINAIMQARAHMKRWQPDAVLGMGGYVSGPGGIAAWLSGIPVVLHEQNAVAGLTNQWLSKIAKKVFQAFPGAFPSAAVVGNPVREDVTQLDEPAQRMQEREGPIRILVMGGSQGARILNQTLPAVMANLGQDYCIRHQAGKGAAQEVQAAYQANNVANAEVTEFIDDVAQAYAWADLLVCRSGALTVSEVSAAGVGAIFIPFMHKDRQQALNADHLVECGAAKMIEQPDLTVESLTQQIQQLDRQALLSMAQKARSAAKLDADKVVAQAIVALTEKR</sequence>
<name>MURG_VIBPA</name>
<reference key="1">
    <citation type="journal article" date="2003" name="Lancet">
        <title>Genome sequence of Vibrio parahaemolyticus: a pathogenic mechanism distinct from that of V. cholerae.</title>
        <authorList>
            <person name="Makino K."/>
            <person name="Oshima K."/>
            <person name="Kurokawa K."/>
            <person name="Yokoyama K."/>
            <person name="Uda T."/>
            <person name="Tagomori K."/>
            <person name="Iijima Y."/>
            <person name="Najima M."/>
            <person name="Nakano M."/>
            <person name="Yamashita A."/>
            <person name="Kubota Y."/>
            <person name="Kimura S."/>
            <person name="Yasunaga T."/>
            <person name="Honda T."/>
            <person name="Shinagawa H."/>
            <person name="Hattori M."/>
            <person name="Iida T."/>
        </authorList>
    </citation>
    <scope>NUCLEOTIDE SEQUENCE [LARGE SCALE GENOMIC DNA]</scope>
    <source>
        <strain>RIMD 2210633</strain>
    </source>
</reference>
<gene>
    <name evidence="1" type="primary">murG</name>
    <name type="ordered locus">VP0460</name>
</gene>